<feature type="chain" id="PRO_0000090850" description="Mothers against decapentaplegic homolog 1">
    <location>
        <begin position="1"/>
        <end position="465"/>
    </location>
</feature>
<feature type="domain" description="MH1" evidence="4">
    <location>
        <begin position="12"/>
        <end position="136"/>
    </location>
</feature>
<feature type="domain" description="MH2" evidence="5">
    <location>
        <begin position="271"/>
        <end position="465"/>
    </location>
</feature>
<feature type="region of interest" description="Disordered" evidence="6">
    <location>
        <begin position="161"/>
        <end position="240"/>
    </location>
</feature>
<feature type="compositionally biased region" description="Low complexity" evidence="6">
    <location>
        <begin position="179"/>
        <end position="210"/>
    </location>
</feature>
<feature type="binding site" evidence="1">
    <location>
        <position position="64"/>
    </location>
    <ligand>
        <name>Zn(2+)</name>
        <dbReference type="ChEBI" id="CHEBI:29105"/>
    </ligand>
</feature>
<feature type="binding site" evidence="1">
    <location>
        <position position="109"/>
    </location>
    <ligand>
        <name>Zn(2+)</name>
        <dbReference type="ChEBI" id="CHEBI:29105"/>
    </ligand>
</feature>
<feature type="binding site" evidence="1">
    <location>
        <position position="121"/>
    </location>
    <ligand>
        <name>Zn(2+)</name>
        <dbReference type="ChEBI" id="CHEBI:29105"/>
    </ligand>
</feature>
<feature type="binding site" evidence="1">
    <location>
        <position position="126"/>
    </location>
    <ligand>
        <name>Zn(2+)</name>
        <dbReference type="ChEBI" id="CHEBI:29105"/>
    </ligand>
</feature>
<feature type="modified residue" description="Phosphoserine" evidence="5">
    <location>
        <position position="463"/>
    </location>
</feature>
<feature type="modified residue" description="Phosphoserine" evidence="5">
    <location>
        <position position="465"/>
    </location>
</feature>
<proteinExistence type="evidence at transcript level"/>
<accession>Q9I962</accession>
<organism>
    <name type="scientific">Coturnix japonica</name>
    <name type="common">Japanese quail</name>
    <name type="synonym">Coturnix coturnix japonica</name>
    <dbReference type="NCBI Taxonomy" id="93934"/>
    <lineage>
        <taxon>Eukaryota</taxon>
        <taxon>Metazoa</taxon>
        <taxon>Chordata</taxon>
        <taxon>Craniata</taxon>
        <taxon>Vertebrata</taxon>
        <taxon>Euteleostomi</taxon>
        <taxon>Archelosauria</taxon>
        <taxon>Archosauria</taxon>
        <taxon>Dinosauria</taxon>
        <taxon>Saurischia</taxon>
        <taxon>Theropoda</taxon>
        <taxon>Coelurosauria</taxon>
        <taxon>Aves</taxon>
        <taxon>Neognathae</taxon>
        <taxon>Galloanserae</taxon>
        <taxon>Galliformes</taxon>
        <taxon>Phasianidae</taxon>
        <taxon>Perdicinae</taxon>
        <taxon>Coturnix</taxon>
    </lineage>
</organism>
<dbReference type="EMBL" id="Y19085">
    <property type="protein sequence ID" value="CAB76819.1"/>
    <property type="molecule type" value="mRNA"/>
</dbReference>
<dbReference type="RefSeq" id="XP_015716640.1">
    <property type="nucleotide sequence ID" value="XM_015861154.2"/>
</dbReference>
<dbReference type="RefSeq" id="XP_015716641.1">
    <property type="nucleotide sequence ID" value="XM_015861155.2"/>
</dbReference>
<dbReference type="RefSeq" id="XP_015716642.1">
    <property type="nucleotide sequence ID" value="XM_015861156.2"/>
</dbReference>
<dbReference type="RefSeq" id="XP_015716644.1">
    <property type="nucleotide sequence ID" value="XM_015861158.2"/>
</dbReference>
<dbReference type="SMR" id="Q9I962"/>
<dbReference type="Ensembl" id="ENSCJPT00005002936.1">
    <property type="protein sequence ID" value="ENSCJPP00005001743.1"/>
    <property type="gene ID" value="ENSCJPG00005001782.1"/>
</dbReference>
<dbReference type="GeneID" id="107313166"/>
<dbReference type="KEGG" id="cjo:107313166"/>
<dbReference type="CTD" id="4086"/>
<dbReference type="GeneTree" id="ENSGT00940000154391"/>
<dbReference type="OrthoDB" id="5794312at2759"/>
<dbReference type="Proteomes" id="UP000694412">
    <property type="component" value="Chromosome 4"/>
</dbReference>
<dbReference type="GO" id="GO:0000785">
    <property type="term" value="C:chromatin"/>
    <property type="evidence" value="ECO:0007669"/>
    <property type="project" value="Ensembl"/>
</dbReference>
<dbReference type="GO" id="GO:0071144">
    <property type="term" value="C:heteromeric SMAD protein complex"/>
    <property type="evidence" value="ECO:0007669"/>
    <property type="project" value="Ensembl"/>
</dbReference>
<dbReference type="GO" id="GO:0071142">
    <property type="term" value="C:homomeric SMAD protein complex"/>
    <property type="evidence" value="ECO:0007669"/>
    <property type="project" value="Ensembl"/>
</dbReference>
<dbReference type="GO" id="GO:0001673">
    <property type="term" value="C:male germ cell nucleus"/>
    <property type="evidence" value="ECO:0007669"/>
    <property type="project" value="Ensembl"/>
</dbReference>
<dbReference type="GO" id="GO:0005637">
    <property type="term" value="C:nuclear inner membrane"/>
    <property type="evidence" value="ECO:0007669"/>
    <property type="project" value="Ensembl"/>
</dbReference>
<dbReference type="GO" id="GO:0070410">
    <property type="term" value="F:co-SMAD binding"/>
    <property type="evidence" value="ECO:0007669"/>
    <property type="project" value="Ensembl"/>
</dbReference>
<dbReference type="GO" id="GO:0017151">
    <property type="term" value="F:DEAD/H-box RNA helicase binding"/>
    <property type="evidence" value="ECO:0007669"/>
    <property type="project" value="Ensembl"/>
</dbReference>
<dbReference type="GO" id="GO:0001228">
    <property type="term" value="F:DNA-binding transcription activator activity, RNA polymerase II-specific"/>
    <property type="evidence" value="ECO:0007669"/>
    <property type="project" value="Ensembl"/>
</dbReference>
<dbReference type="GO" id="GO:0070411">
    <property type="term" value="F:I-SMAD binding"/>
    <property type="evidence" value="ECO:0007669"/>
    <property type="project" value="Ensembl"/>
</dbReference>
<dbReference type="GO" id="GO:0042802">
    <property type="term" value="F:identical protein binding"/>
    <property type="evidence" value="ECO:0007669"/>
    <property type="project" value="Ensembl"/>
</dbReference>
<dbReference type="GO" id="GO:0046872">
    <property type="term" value="F:metal ion binding"/>
    <property type="evidence" value="ECO:0007669"/>
    <property type="project" value="UniProtKB-KW"/>
</dbReference>
<dbReference type="GO" id="GO:0070878">
    <property type="term" value="F:primary miRNA binding"/>
    <property type="evidence" value="ECO:0007669"/>
    <property type="project" value="Ensembl"/>
</dbReference>
<dbReference type="GO" id="GO:0019901">
    <property type="term" value="F:protein kinase binding"/>
    <property type="evidence" value="ECO:0007669"/>
    <property type="project" value="Ensembl"/>
</dbReference>
<dbReference type="GO" id="GO:0000978">
    <property type="term" value="F:RNA polymerase II cis-regulatory region sequence-specific DNA binding"/>
    <property type="evidence" value="ECO:0007669"/>
    <property type="project" value="Ensembl"/>
</dbReference>
<dbReference type="GO" id="GO:0031625">
    <property type="term" value="F:ubiquitin protein ligase binding"/>
    <property type="evidence" value="ECO:0007669"/>
    <property type="project" value="Ensembl"/>
</dbReference>
<dbReference type="GO" id="GO:0030509">
    <property type="term" value="P:BMP signaling pathway"/>
    <property type="evidence" value="ECO:0000250"/>
    <property type="project" value="UniProtKB"/>
</dbReference>
<dbReference type="GO" id="GO:0060348">
    <property type="term" value="P:bone development"/>
    <property type="evidence" value="ECO:0007669"/>
    <property type="project" value="Ensembl"/>
</dbReference>
<dbReference type="GO" id="GO:0060038">
    <property type="term" value="P:cardiac muscle cell proliferation"/>
    <property type="evidence" value="ECO:0007669"/>
    <property type="project" value="Ensembl"/>
</dbReference>
<dbReference type="GO" id="GO:0051216">
    <property type="term" value="P:cartilage development"/>
    <property type="evidence" value="ECO:0007669"/>
    <property type="project" value="Ensembl"/>
</dbReference>
<dbReference type="GO" id="GO:0009880">
    <property type="term" value="P:embryonic pattern specification"/>
    <property type="evidence" value="ECO:0000250"/>
    <property type="project" value="UniProtKB"/>
</dbReference>
<dbReference type="GO" id="GO:0007276">
    <property type="term" value="P:gamete generation"/>
    <property type="evidence" value="ECO:0007669"/>
    <property type="project" value="Ensembl"/>
</dbReference>
<dbReference type="GO" id="GO:0030902">
    <property type="term" value="P:hindbrain development"/>
    <property type="evidence" value="ECO:0007669"/>
    <property type="project" value="Ensembl"/>
</dbReference>
<dbReference type="GO" id="GO:0006954">
    <property type="term" value="P:inflammatory response"/>
    <property type="evidence" value="ECO:0007669"/>
    <property type="project" value="Ensembl"/>
</dbReference>
<dbReference type="GO" id="GO:0006879">
    <property type="term" value="P:intracellular iron ion homeostasis"/>
    <property type="evidence" value="ECO:0007669"/>
    <property type="project" value="Ensembl"/>
</dbReference>
<dbReference type="GO" id="GO:0000165">
    <property type="term" value="P:MAPK cascade"/>
    <property type="evidence" value="ECO:0007669"/>
    <property type="project" value="Ensembl"/>
</dbReference>
<dbReference type="GO" id="GO:0001710">
    <property type="term" value="P:mesodermal cell fate commitment"/>
    <property type="evidence" value="ECO:0007669"/>
    <property type="project" value="Ensembl"/>
</dbReference>
<dbReference type="GO" id="GO:0030901">
    <property type="term" value="P:midbrain development"/>
    <property type="evidence" value="ECO:0007669"/>
    <property type="project" value="Ensembl"/>
</dbReference>
<dbReference type="GO" id="GO:0008285">
    <property type="term" value="P:negative regulation of cell population proliferation"/>
    <property type="evidence" value="ECO:0007669"/>
    <property type="project" value="Ensembl"/>
</dbReference>
<dbReference type="GO" id="GO:0051148">
    <property type="term" value="P:negative regulation of muscle cell differentiation"/>
    <property type="evidence" value="ECO:0007669"/>
    <property type="project" value="Ensembl"/>
</dbReference>
<dbReference type="GO" id="GO:0002051">
    <property type="term" value="P:osteoblast fate commitment"/>
    <property type="evidence" value="ECO:0007669"/>
    <property type="project" value="Ensembl"/>
</dbReference>
<dbReference type="GO" id="GO:0061036">
    <property type="term" value="P:positive regulation of cartilage development"/>
    <property type="evidence" value="ECO:0007669"/>
    <property type="project" value="Ensembl"/>
</dbReference>
<dbReference type="GO" id="GO:0010628">
    <property type="term" value="P:positive regulation of gene expression"/>
    <property type="evidence" value="ECO:0007669"/>
    <property type="project" value="Ensembl"/>
</dbReference>
<dbReference type="GO" id="GO:1902895">
    <property type="term" value="P:positive regulation of miRNA transcription"/>
    <property type="evidence" value="ECO:0007669"/>
    <property type="project" value="Ensembl"/>
</dbReference>
<dbReference type="GO" id="GO:0045669">
    <property type="term" value="P:positive regulation of osteoblast differentiation"/>
    <property type="evidence" value="ECO:0007669"/>
    <property type="project" value="Ensembl"/>
</dbReference>
<dbReference type="GO" id="GO:1903672">
    <property type="term" value="P:positive regulation of sprouting angiogenesis"/>
    <property type="evidence" value="ECO:0007669"/>
    <property type="project" value="Ensembl"/>
</dbReference>
<dbReference type="GO" id="GO:0060395">
    <property type="term" value="P:SMAD protein signal transduction"/>
    <property type="evidence" value="ECO:0007669"/>
    <property type="project" value="Ensembl"/>
</dbReference>
<dbReference type="GO" id="GO:0048863">
    <property type="term" value="P:stem cell differentiation"/>
    <property type="evidence" value="ECO:0007669"/>
    <property type="project" value="Ensembl"/>
</dbReference>
<dbReference type="GO" id="GO:0006366">
    <property type="term" value="P:transcription by RNA polymerase II"/>
    <property type="evidence" value="ECO:0007669"/>
    <property type="project" value="Ensembl"/>
</dbReference>
<dbReference type="GO" id="GO:0007179">
    <property type="term" value="P:transforming growth factor beta receptor signaling pathway"/>
    <property type="evidence" value="ECO:0007669"/>
    <property type="project" value="Ensembl"/>
</dbReference>
<dbReference type="GO" id="GO:0001657">
    <property type="term" value="P:ureteric bud development"/>
    <property type="evidence" value="ECO:0007669"/>
    <property type="project" value="Ensembl"/>
</dbReference>
<dbReference type="CDD" id="cd10490">
    <property type="entry name" value="MH1_SMAD_1_5_9"/>
    <property type="match status" value="1"/>
</dbReference>
<dbReference type="CDD" id="cd10497">
    <property type="entry name" value="MH2_SMAD_1_5_9"/>
    <property type="match status" value="1"/>
</dbReference>
<dbReference type="FunFam" id="2.60.200.10:FF:000001">
    <property type="entry name" value="Mothers against decapentaplegic homolog"/>
    <property type="match status" value="1"/>
</dbReference>
<dbReference type="FunFam" id="3.90.520.10:FF:000001">
    <property type="entry name" value="Mothers against decapentaplegic homolog"/>
    <property type="match status" value="1"/>
</dbReference>
<dbReference type="Gene3D" id="2.60.200.10">
    <property type="match status" value="1"/>
</dbReference>
<dbReference type="Gene3D" id="3.90.520.10">
    <property type="entry name" value="SMAD MH1 domain"/>
    <property type="match status" value="1"/>
</dbReference>
<dbReference type="InterPro" id="IPR013790">
    <property type="entry name" value="Dwarfin"/>
</dbReference>
<dbReference type="InterPro" id="IPR003619">
    <property type="entry name" value="MAD_homology1_Dwarfin-type"/>
</dbReference>
<dbReference type="InterPro" id="IPR013019">
    <property type="entry name" value="MAD_homology_MH1"/>
</dbReference>
<dbReference type="InterPro" id="IPR017855">
    <property type="entry name" value="SMAD-like_dom_sf"/>
</dbReference>
<dbReference type="InterPro" id="IPR001132">
    <property type="entry name" value="SMAD_dom_Dwarfin-type"/>
</dbReference>
<dbReference type="InterPro" id="IPR008984">
    <property type="entry name" value="SMAD_FHA_dom_sf"/>
</dbReference>
<dbReference type="InterPro" id="IPR036578">
    <property type="entry name" value="SMAD_MH1_sf"/>
</dbReference>
<dbReference type="PANTHER" id="PTHR13703:SF23">
    <property type="entry name" value="MOTHERS AGAINST DECAPENTAPLEGIC HOMOLOG 1"/>
    <property type="match status" value="1"/>
</dbReference>
<dbReference type="PANTHER" id="PTHR13703">
    <property type="entry name" value="SMAD"/>
    <property type="match status" value="1"/>
</dbReference>
<dbReference type="Pfam" id="PF03165">
    <property type="entry name" value="MH1"/>
    <property type="match status" value="1"/>
</dbReference>
<dbReference type="Pfam" id="PF03166">
    <property type="entry name" value="MH2"/>
    <property type="match status" value="1"/>
</dbReference>
<dbReference type="SMART" id="SM00523">
    <property type="entry name" value="DWA"/>
    <property type="match status" value="1"/>
</dbReference>
<dbReference type="SMART" id="SM00524">
    <property type="entry name" value="DWB"/>
    <property type="match status" value="1"/>
</dbReference>
<dbReference type="SUPFAM" id="SSF56366">
    <property type="entry name" value="SMAD MH1 domain"/>
    <property type="match status" value="1"/>
</dbReference>
<dbReference type="SUPFAM" id="SSF49879">
    <property type="entry name" value="SMAD/FHA domain"/>
    <property type="match status" value="1"/>
</dbReference>
<dbReference type="PROSITE" id="PS51075">
    <property type="entry name" value="MH1"/>
    <property type="match status" value="1"/>
</dbReference>
<dbReference type="PROSITE" id="PS51076">
    <property type="entry name" value="MH2"/>
    <property type="match status" value="1"/>
</dbReference>
<reference key="1">
    <citation type="journal article" date="1995" name="Mech. Dev.">
        <title>The developmental relationships of the neural tube and the notochord: short and long term effects of the notochord on the dorsal spinal cord.</title>
        <authorList>
            <person name="Monsoro-Burq A.H."/>
            <person name="Bontoux M."/>
            <person name="Vincent C."/>
            <person name="Le Douarin N.M."/>
        </authorList>
    </citation>
    <scope>NUCLEOTIDE SEQUENCE [MRNA]</scope>
</reference>
<keyword id="KW-0963">Cytoplasm</keyword>
<keyword id="KW-0238">DNA-binding</keyword>
<keyword id="KW-0479">Metal-binding</keyword>
<keyword id="KW-0539">Nucleus</keyword>
<keyword id="KW-0597">Phosphoprotein</keyword>
<keyword id="KW-1185">Reference proteome</keyword>
<keyword id="KW-0804">Transcription</keyword>
<keyword id="KW-0805">Transcription regulation</keyword>
<keyword id="KW-0832">Ubl conjugation</keyword>
<keyword id="KW-0862">Zinc</keyword>
<protein>
    <recommendedName>
        <fullName>Mothers against decapentaplegic homolog 1</fullName>
        <shortName>MAD homolog 1</shortName>
        <shortName>Mothers against DPP homolog 1</shortName>
    </recommendedName>
    <alternativeName>
        <fullName>Mad-related protein 1</fullName>
    </alternativeName>
    <alternativeName>
        <fullName>SMAD family member 1</fullName>
        <shortName>SMAD 1</shortName>
        <shortName>Smad1</shortName>
    </alternativeName>
</protein>
<name>SMAD1_COTJA</name>
<comment type="function">
    <text evidence="3">Transcriptional modulator that plays a role in various cellular processes, including embryonic development, cell differentiation, and tissue homeostasis. Upon BMP ligand binding to their receptors at the cell surface, is phosphorylated by activated type I BMP receptors (BMPRIs) and associates with SMAD4 to form an heteromeric complex which translocates into the nucleus acting as transcription factor. In turn, the hetero-trimeric complex recognizes cis-regulatory elements containing Smad Binding Elements (SBEs) to modulate the outcome of the signaling network. SMAD1/OAZ1/PSMB4 complex mediates the degradation of the CREBBP/EP300 repressor SNIP1.</text>
</comment>
<comment type="subunit">
    <text evidence="2 3">Found in a complex with SMAD4 and YY1. Interacts with HGS, NANOG and ZCCHC12 (By similarity). Upon C-terminus phosphorylation: forms trimers with another SMAD1 and the co-SMAD SMAD4 (By similarity). Interacts with PEBP2-alpha subunit, CREB-binding protein (CBP), p300, SMURF1, SMURF2, USP15 and HOXC8. Associates with ZNF423 or ZNF521 in response to BMP2 leading to activate transcription of BMP target genes. Interacts with SKOR1. Interacts (via MH2 domain) with LEMD3. Binding to LEMD3 results in at least a partial reduction of receptor-mediated phosphorylation. Forms a ternary complex with PSMB4 and OAZ1 before PSMB4 is incorporated into the 20S proteasome. Found in a macromolecular complex with FAM83G. Interacts (via MH2 domain) with FAM83G (via MH2 domain); in a SMAD4-independent manner. Interacts with ZC3H3 (By similarity). Interacts with TMEM119 (By similarity). Interacts (via MH1 and MH2 domains) with ZNF8 (By similarity). Interacts with RANBP3L; the interaction increases when SMAD1 is not phosphorylated and mediates SMAD1 nuclear export. Interacts with EGR1; this interaction inhibits SMAD1 dephosphorylation (By similarity). Interacts with SMAD6. Interacts with YAP1 (By similarity).</text>
</comment>
<comment type="subcellular location">
    <subcellularLocation>
        <location evidence="3">Cytoplasm</location>
    </subcellularLocation>
    <subcellularLocation>
        <location evidence="3">Nucleus</location>
    </subcellularLocation>
    <text evidence="2 3">Cytoplasmic in the absence of ligand. Migrates to the nucleus when complexed with SMAD4. Co-localizes with LEMD3 at the nucleus inner membrane (By similarity). Exported from the nucleus to the cytoplasm when dephosphorylated (By similarity).</text>
</comment>
<comment type="PTM">
    <text evidence="3">Phosphorylation of the C-terminal SVS motif by BMP type 1 receptor kinase activates SMAD1 by promoting dissociation from the receptor and trimerization with SMAD4. Phosphorylation by ERK2 MAP kinase in response to EGF or HGF prevents SMAD1 nuclear accumulation and transcriptional activity in response to BMP (By similarity). Dephosphorylation, probably by PPM1A, induces its export from the nucleus to the cytoplasm (By similarity). Dephosphorylation is inhibited by association with EGR1 (By similarity). Phosphorylation by CDK8/9 creates binding sites for YAP1, and subsequent phosphorylation by GSK3 switches off YAP1 binding and adds binding sites for SMURF1 (By similarity).</text>
</comment>
<comment type="PTM">
    <text evidence="2 3">Ubiquitinated by SMAD-specific E3 ubiquitin ligase SMURF1, leading to its degradation. Monoubiquitinated, leading to prevent DNA-binding. Deubiquitination by USP15 alleviates inhibition and promotes activation of TGF-beta target genes. Dephosphorylation, probably by PPM1A, induces its export from the nucleus to the cytoplasm (By similarity). Phospho-SMAD1 is ubiquitinated by CHIP leading to disruption of the SMAD1-SMAD4 complex (By similarity).</text>
</comment>
<comment type="similarity">
    <text evidence="7">Belongs to the dwarfin/SMAD family.</text>
</comment>
<gene>
    <name type="primary">SMAD1</name>
    <name type="synonym">MADH1</name>
</gene>
<evidence type="ECO:0000250" key="1"/>
<evidence type="ECO:0000250" key="2">
    <source>
        <dbReference type="UniProtKB" id="P70340"/>
    </source>
</evidence>
<evidence type="ECO:0000250" key="3">
    <source>
        <dbReference type="UniProtKB" id="Q15797"/>
    </source>
</evidence>
<evidence type="ECO:0000255" key="4">
    <source>
        <dbReference type="PROSITE-ProRule" id="PRU00438"/>
    </source>
</evidence>
<evidence type="ECO:0000255" key="5">
    <source>
        <dbReference type="PROSITE-ProRule" id="PRU00439"/>
    </source>
</evidence>
<evidence type="ECO:0000256" key="6">
    <source>
        <dbReference type="SAM" id="MobiDB-lite"/>
    </source>
</evidence>
<evidence type="ECO:0000305" key="7"/>
<sequence length="465" mass="52371">MNVTSLFSFTSPAVKRLLGWKQGDEEEKWAEKAVDALVKKLKKKKGAMEELEKALSCPGQPSNCVTIPRSLDGRLQVSHRKGLPHVIYCRVWRWPDLQSHHELKPLECCEFPFGSKQKEVCINPYHYKRVESPVLPPVLVPRHSEYNPQHSLLAQFRNLGQNEPHMPHNATFPDSFQQPNSHPFPHSPNSSYPNSPGSSSSTYPHSPASSDPGSPFQMPADTPPPAYLPPEDQMTHDTSQPMDTNMMAPGIHPDIHRGDVQAVAYEEPKHWCSIVYYELNNRVGEAFHASSTSILVDGFTDPSNNKNRFCLGLLSNVNRNSTIENTRRHIGKGVHLYYVGGEVYAECLSDSSIFVQSRNCNYHHGFHPTTVCKIPSGCSLKIFNNQEFAQLLAQSVNHGFETVYELTKMCTLRMSFVKGWGAEYHRQDVTSTPCWIEIHLHGPLQWLDKVLTQMGSPHNPISSVS</sequence>